<name>YHEF_BACSU</name>
<proteinExistence type="predicted"/>
<sequence>MSFITIVNWELVQFVSVSMIHEYVSHRSVYLYRYSFPRCSN</sequence>
<accession>O07547</accession>
<dbReference type="EMBL" id="Y14080">
    <property type="protein sequence ID" value="CAA74458.1"/>
    <property type="molecule type" value="Genomic_DNA"/>
</dbReference>
<dbReference type="EMBL" id="AL009126">
    <property type="protein sequence ID" value="CAB12813.1"/>
    <property type="molecule type" value="Genomic_DNA"/>
</dbReference>
<dbReference type="PIR" id="F69828">
    <property type="entry name" value="F69828"/>
</dbReference>
<dbReference type="RefSeq" id="NP_388855.1">
    <property type="nucleotide sequence ID" value="NC_000964.3"/>
</dbReference>
<dbReference type="RefSeq" id="WP_003245136.1">
    <property type="nucleotide sequence ID" value="NZ_OZ025638.1"/>
</dbReference>
<dbReference type="FunCoup" id="O07547">
    <property type="interactions" value="49"/>
</dbReference>
<dbReference type="STRING" id="224308.BSU09740"/>
<dbReference type="PaxDb" id="224308-BSU09740"/>
<dbReference type="EnsemblBacteria" id="CAB12813">
    <property type="protein sequence ID" value="CAB12813"/>
    <property type="gene ID" value="BSU_09740"/>
</dbReference>
<dbReference type="GeneID" id="936277"/>
<dbReference type="KEGG" id="bsu:BSU09740"/>
<dbReference type="PATRIC" id="fig|224308.43.peg.1016"/>
<dbReference type="InParanoid" id="O07547"/>
<dbReference type="OrthoDB" id="2897087at2"/>
<dbReference type="BioCyc" id="BSUB:BSU09740-MONOMER"/>
<dbReference type="Proteomes" id="UP000001570">
    <property type="component" value="Chromosome"/>
</dbReference>
<gene>
    <name type="primary">yheF</name>
    <name type="ordered locus">BSU09740</name>
</gene>
<protein>
    <recommendedName>
        <fullName>Uncharacterized protein YheF</fullName>
    </recommendedName>
</protein>
<reference key="1">
    <citation type="journal article" date="1998" name="Microbiology">
        <title>The 172 kb prkA-addAB region from 83 degrees to 97 degrees of the Bacillus subtilis chromosome contains several dysfunctional genes, the glyB marker, many genes encoding transporter proteins, and the ubiquitous hit gene.</title>
        <authorList>
            <person name="Noback M.A."/>
            <person name="Holsappel S."/>
            <person name="Kiewiet R."/>
            <person name="Terpstra P."/>
            <person name="Wambutt R."/>
            <person name="Wedler H."/>
            <person name="Venema G."/>
            <person name="Bron S."/>
        </authorList>
    </citation>
    <scope>NUCLEOTIDE SEQUENCE [GENOMIC DNA]</scope>
    <source>
        <strain>168</strain>
    </source>
</reference>
<reference key="2">
    <citation type="journal article" date="1997" name="Nature">
        <title>The complete genome sequence of the Gram-positive bacterium Bacillus subtilis.</title>
        <authorList>
            <person name="Kunst F."/>
            <person name="Ogasawara N."/>
            <person name="Moszer I."/>
            <person name="Albertini A.M."/>
            <person name="Alloni G."/>
            <person name="Azevedo V."/>
            <person name="Bertero M.G."/>
            <person name="Bessieres P."/>
            <person name="Bolotin A."/>
            <person name="Borchert S."/>
            <person name="Borriss R."/>
            <person name="Boursier L."/>
            <person name="Brans A."/>
            <person name="Braun M."/>
            <person name="Brignell S.C."/>
            <person name="Bron S."/>
            <person name="Brouillet S."/>
            <person name="Bruschi C.V."/>
            <person name="Caldwell B."/>
            <person name="Capuano V."/>
            <person name="Carter N.M."/>
            <person name="Choi S.-K."/>
            <person name="Codani J.-J."/>
            <person name="Connerton I.F."/>
            <person name="Cummings N.J."/>
            <person name="Daniel R.A."/>
            <person name="Denizot F."/>
            <person name="Devine K.M."/>
            <person name="Duesterhoeft A."/>
            <person name="Ehrlich S.D."/>
            <person name="Emmerson P.T."/>
            <person name="Entian K.-D."/>
            <person name="Errington J."/>
            <person name="Fabret C."/>
            <person name="Ferrari E."/>
            <person name="Foulger D."/>
            <person name="Fritz C."/>
            <person name="Fujita M."/>
            <person name="Fujita Y."/>
            <person name="Fuma S."/>
            <person name="Galizzi A."/>
            <person name="Galleron N."/>
            <person name="Ghim S.-Y."/>
            <person name="Glaser P."/>
            <person name="Goffeau A."/>
            <person name="Golightly E.J."/>
            <person name="Grandi G."/>
            <person name="Guiseppi G."/>
            <person name="Guy B.J."/>
            <person name="Haga K."/>
            <person name="Haiech J."/>
            <person name="Harwood C.R."/>
            <person name="Henaut A."/>
            <person name="Hilbert H."/>
            <person name="Holsappel S."/>
            <person name="Hosono S."/>
            <person name="Hullo M.-F."/>
            <person name="Itaya M."/>
            <person name="Jones L.-M."/>
            <person name="Joris B."/>
            <person name="Karamata D."/>
            <person name="Kasahara Y."/>
            <person name="Klaerr-Blanchard M."/>
            <person name="Klein C."/>
            <person name="Kobayashi Y."/>
            <person name="Koetter P."/>
            <person name="Koningstein G."/>
            <person name="Krogh S."/>
            <person name="Kumano M."/>
            <person name="Kurita K."/>
            <person name="Lapidus A."/>
            <person name="Lardinois S."/>
            <person name="Lauber J."/>
            <person name="Lazarevic V."/>
            <person name="Lee S.-M."/>
            <person name="Levine A."/>
            <person name="Liu H."/>
            <person name="Masuda S."/>
            <person name="Mauel C."/>
            <person name="Medigue C."/>
            <person name="Medina N."/>
            <person name="Mellado R.P."/>
            <person name="Mizuno M."/>
            <person name="Moestl D."/>
            <person name="Nakai S."/>
            <person name="Noback M."/>
            <person name="Noone D."/>
            <person name="O'Reilly M."/>
            <person name="Ogawa K."/>
            <person name="Ogiwara A."/>
            <person name="Oudega B."/>
            <person name="Park S.-H."/>
            <person name="Parro V."/>
            <person name="Pohl T.M."/>
            <person name="Portetelle D."/>
            <person name="Porwollik S."/>
            <person name="Prescott A.M."/>
            <person name="Presecan E."/>
            <person name="Pujic P."/>
            <person name="Purnelle B."/>
            <person name="Rapoport G."/>
            <person name="Rey M."/>
            <person name="Reynolds S."/>
            <person name="Rieger M."/>
            <person name="Rivolta C."/>
            <person name="Rocha E."/>
            <person name="Roche B."/>
            <person name="Rose M."/>
            <person name="Sadaie Y."/>
            <person name="Sato T."/>
            <person name="Scanlan E."/>
            <person name="Schleich S."/>
            <person name="Schroeter R."/>
            <person name="Scoffone F."/>
            <person name="Sekiguchi J."/>
            <person name="Sekowska A."/>
            <person name="Seror S.J."/>
            <person name="Serror P."/>
            <person name="Shin B.-S."/>
            <person name="Soldo B."/>
            <person name="Sorokin A."/>
            <person name="Tacconi E."/>
            <person name="Takagi T."/>
            <person name="Takahashi H."/>
            <person name="Takemaru K."/>
            <person name="Takeuchi M."/>
            <person name="Tamakoshi A."/>
            <person name="Tanaka T."/>
            <person name="Terpstra P."/>
            <person name="Tognoni A."/>
            <person name="Tosato V."/>
            <person name="Uchiyama S."/>
            <person name="Vandenbol M."/>
            <person name="Vannier F."/>
            <person name="Vassarotti A."/>
            <person name="Viari A."/>
            <person name="Wambutt R."/>
            <person name="Wedler E."/>
            <person name="Wedler H."/>
            <person name="Weitzenegger T."/>
            <person name="Winters P."/>
            <person name="Wipat A."/>
            <person name="Yamamoto H."/>
            <person name="Yamane K."/>
            <person name="Yasumoto K."/>
            <person name="Yata K."/>
            <person name="Yoshida K."/>
            <person name="Yoshikawa H.-F."/>
            <person name="Zumstein E."/>
            <person name="Yoshikawa H."/>
            <person name="Danchin A."/>
        </authorList>
    </citation>
    <scope>NUCLEOTIDE SEQUENCE [LARGE SCALE GENOMIC DNA]</scope>
    <source>
        <strain>168</strain>
    </source>
</reference>
<organism>
    <name type="scientific">Bacillus subtilis (strain 168)</name>
    <dbReference type="NCBI Taxonomy" id="224308"/>
    <lineage>
        <taxon>Bacteria</taxon>
        <taxon>Bacillati</taxon>
        <taxon>Bacillota</taxon>
        <taxon>Bacilli</taxon>
        <taxon>Bacillales</taxon>
        <taxon>Bacillaceae</taxon>
        <taxon>Bacillus</taxon>
    </lineage>
</organism>
<feature type="chain" id="PRO_0000049574" description="Uncharacterized protein YheF">
    <location>
        <begin position="1"/>
        <end position="41"/>
    </location>
</feature>
<keyword id="KW-1185">Reference proteome</keyword>